<protein>
    <recommendedName>
        <fullName>DNA-directed RNA polymerase III subunit rpc1</fullName>
        <shortName>RNA polymerase III subunit C1</shortName>
        <ecNumber>2.7.7.6</ecNumber>
    </recommendedName>
    <alternativeName>
        <fullName>DNA-directed RNA polymerase III largest subunit</fullName>
    </alternativeName>
    <alternativeName>
        <fullName>RPC158</fullName>
    </alternativeName>
</protein>
<organism>
    <name type="scientific">Schizosaccharomyces pombe (strain 972 / ATCC 24843)</name>
    <name type="common">Fission yeast</name>
    <dbReference type="NCBI Taxonomy" id="284812"/>
    <lineage>
        <taxon>Eukaryota</taxon>
        <taxon>Fungi</taxon>
        <taxon>Dikarya</taxon>
        <taxon>Ascomycota</taxon>
        <taxon>Taphrinomycotina</taxon>
        <taxon>Schizosaccharomycetes</taxon>
        <taxon>Schizosaccharomycetales</taxon>
        <taxon>Schizosaccharomycetaceae</taxon>
        <taxon>Schizosaccharomyces</taxon>
    </lineage>
</organism>
<comment type="function">
    <text evidence="1">DNA-dependent RNA polymerase catalyzes the transcription of DNA into RNA using the four ribonucleoside triphosphates as substrates. Largest and catalytic core component of RNA polymerase III which synthesizes small RNAs, such as 5S rRNA and tRNAs. Forms the polymerase active center together with the second largest subunit. A single-stranded DNA template strand of the promoter is positioned within the central active site cleft of Pol III. A bridging helix emanates from RPC1 and crosses the cleft near the catalytic site and is thought to promote translocation of Pol III by acting as a ratchet that moves the RNA-DNA hybrid through the active site by switching from straight to bent conformations at each step of nucleotide addition (By similarity).</text>
</comment>
<comment type="catalytic activity">
    <reaction>
        <text>RNA(n) + a ribonucleoside 5'-triphosphate = RNA(n+1) + diphosphate</text>
        <dbReference type="Rhea" id="RHEA:21248"/>
        <dbReference type="Rhea" id="RHEA-COMP:14527"/>
        <dbReference type="Rhea" id="RHEA-COMP:17342"/>
        <dbReference type="ChEBI" id="CHEBI:33019"/>
        <dbReference type="ChEBI" id="CHEBI:61557"/>
        <dbReference type="ChEBI" id="CHEBI:140395"/>
        <dbReference type="EC" id="2.7.7.6"/>
    </reaction>
</comment>
<comment type="subunit">
    <text evidence="1">Component of the RNA polymerase III (Pol III) complex consisting of 17 subunits.</text>
</comment>
<comment type="subcellular location">
    <subcellularLocation>
        <location evidence="1">Nucleus</location>
    </subcellularLocation>
</comment>
<comment type="similarity">
    <text evidence="2">Belongs to the RNA polymerase beta' chain family.</text>
</comment>
<reference key="1">
    <citation type="journal article" date="2006" name="Nucleic Acids Res.">
        <title>Ancient origin, functional conservation and fast evolution of DNA-dependent RNA polymerase III.</title>
        <authorList>
            <person name="Proshkina G.M."/>
            <person name="Shematorova E.K."/>
            <person name="Proshkin S.A."/>
            <person name="Zaros C."/>
            <person name="Thuriaux P."/>
            <person name="Shpakovski G.V."/>
        </authorList>
    </citation>
    <scope>NUCLEOTIDE SEQUENCE [MRNA]</scope>
    <source>
        <strain>972 / ATCC 24843</strain>
    </source>
</reference>
<reference key="2">
    <citation type="journal article" date="2002" name="Nature">
        <title>The genome sequence of Schizosaccharomyces pombe.</title>
        <authorList>
            <person name="Wood V."/>
            <person name="Gwilliam R."/>
            <person name="Rajandream M.A."/>
            <person name="Lyne M.H."/>
            <person name="Lyne R."/>
            <person name="Stewart A."/>
            <person name="Sgouros J.G."/>
            <person name="Peat N."/>
            <person name="Hayles J."/>
            <person name="Baker S.G."/>
            <person name="Basham D."/>
            <person name="Bowman S."/>
            <person name="Brooks K."/>
            <person name="Brown D."/>
            <person name="Brown S."/>
            <person name="Chillingworth T."/>
            <person name="Churcher C.M."/>
            <person name="Collins M."/>
            <person name="Connor R."/>
            <person name="Cronin A."/>
            <person name="Davis P."/>
            <person name="Feltwell T."/>
            <person name="Fraser A."/>
            <person name="Gentles S."/>
            <person name="Goble A."/>
            <person name="Hamlin N."/>
            <person name="Harris D.E."/>
            <person name="Hidalgo J."/>
            <person name="Hodgson G."/>
            <person name="Holroyd S."/>
            <person name="Hornsby T."/>
            <person name="Howarth S."/>
            <person name="Huckle E.J."/>
            <person name="Hunt S."/>
            <person name="Jagels K."/>
            <person name="James K.D."/>
            <person name="Jones L."/>
            <person name="Jones M."/>
            <person name="Leather S."/>
            <person name="McDonald S."/>
            <person name="McLean J."/>
            <person name="Mooney P."/>
            <person name="Moule S."/>
            <person name="Mungall K.L."/>
            <person name="Murphy L.D."/>
            <person name="Niblett D."/>
            <person name="Odell C."/>
            <person name="Oliver K."/>
            <person name="O'Neil S."/>
            <person name="Pearson D."/>
            <person name="Quail M.A."/>
            <person name="Rabbinowitsch E."/>
            <person name="Rutherford K.M."/>
            <person name="Rutter S."/>
            <person name="Saunders D."/>
            <person name="Seeger K."/>
            <person name="Sharp S."/>
            <person name="Skelton J."/>
            <person name="Simmonds M.N."/>
            <person name="Squares R."/>
            <person name="Squares S."/>
            <person name="Stevens K."/>
            <person name="Taylor K."/>
            <person name="Taylor R.G."/>
            <person name="Tivey A."/>
            <person name="Walsh S.V."/>
            <person name="Warren T."/>
            <person name="Whitehead S."/>
            <person name="Woodward J.R."/>
            <person name="Volckaert G."/>
            <person name="Aert R."/>
            <person name="Robben J."/>
            <person name="Grymonprez B."/>
            <person name="Weltjens I."/>
            <person name="Vanstreels E."/>
            <person name="Rieger M."/>
            <person name="Schaefer M."/>
            <person name="Mueller-Auer S."/>
            <person name="Gabel C."/>
            <person name="Fuchs M."/>
            <person name="Duesterhoeft A."/>
            <person name="Fritzc C."/>
            <person name="Holzer E."/>
            <person name="Moestl D."/>
            <person name="Hilbert H."/>
            <person name="Borzym K."/>
            <person name="Langer I."/>
            <person name="Beck A."/>
            <person name="Lehrach H."/>
            <person name="Reinhardt R."/>
            <person name="Pohl T.M."/>
            <person name="Eger P."/>
            <person name="Zimmermann W."/>
            <person name="Wedler H."/>
            <person name="Wambutt R."/>
            <person name="Purnelle B."/>
            <person name="Goffeau A."/>
            <person name="Cadieu E."/>
            <person name="Dreano S."/>
            <person name="Gloux S."/>
            <person name="Lelaure V."/>
            <person name="Mottier S."/>
            <person name="Galibert F."/>
            <person name="Aves S.J."/>
            <person name="Xiang Z."/>
            <person name="Hunt C."/>
            <person name="Moore K."/>
            <person name="Hurst S.M."/>
            <person name="Lucas M."/>
            <person name="Rochet M."/>
            <person name="Gaillardin C."/>
            <person name="Tallada V.A."/>
            <person name="Garzon A."/>
            <person name="Thode G."/>
            <person name="Daga R.R."/>
            <person name="Cruzado L."/>
            <person name="Jimenez J."/>
            <person name="Sanchez M."/>
            <person name="del Rey F."/>
            <person name="Benito J."/>
            <person name="Dominguez A."/>
            <person name="Revuelta J.L."/>
            <person name="Moreno S."/>
            <person name="Armstrong J."/>
            <person name="Forsburg S.L."/>
            <person name="Cerutti L."/>
            <person name="Lowe T."/>
            <person name="McCombie W.R."/>
            <person name="Paulsen I."/>
            <person name="Potashkin J."/>
            <person name="Shpakovski G.V."/>
            <person name="Ussery D."/>
            <person name="Barrell B.G."/>
            <person name="Nurse P."/>
        </authorList>
    </citation>
    <scope>NUCLEOTIDE SEQUENCE [LARGE SCALE GENOMIC DNA]</scope>
    <source>
        <strain>972 / ATCC 24843</strain>
    </source>
</reference>
<feature type="chain" id="PRO_0000073951" description="DNA-directed RNA polymerase III subunit rpc1">
    <location>
        <begin position="1"/>
        <end position="1405"/>
    </location>
</feature>
<feature type="region of interest" description="Bridging helix" evidence="1">
    <location>
        <begin position="838"/>
        <end position="850"/>
    </location>
</feature>
<feature type="binding site" evidence="1">
    <location>
        <position position="66"/>
    </location>
    <ligand>
        <name>Zn(2+)</name>
        <dbReference type="ChEBI" id="CHEBI:29105"/>
        <label>1</label>
    </ligand>
</feature>
<feature type="binding site" evidence="1">
    <location>
        <position position="69"/>
    </location>
    <ligand>
        <name>Zn(2+)</name>
        <dbReference type="ChEBI" id="CHEBI:29105"/>
        <label>1</label>
    </ligand>
</feature>
<feature type="binding site" evidence="1">
    <location>
        <position position="76"/>
    </location>
    <ligand>
        <name>Zn(2+)</name>
        <dbReference type="ChEBI" id="CHEBI:29105"/>
        <label>1</label>
    </ligand>
</feature>
<feature type="binding site" evidence="1">
    <location>
        <position position="79"/>
    </location>
    <ligand>
        <name>Zn(2+)</name>
        <dbReference type="ChEBI" id="CHEBI:29105"/>
        <label>1</label>
    </ligand>
</feature>
<feature type="binding site" evidence="1">
    <location>
        <position position="106"/>
    </location>
    <ligand>
        <name>Zn(2+)</name>
        <dbReference type="ChEBI" id="CHEBI:29105"/>
        <label>2</label>
    </ligand>
</feature>
<feature type="binding site" evidence="1">
    <location>
        <position position="109"/>
    </location>
    <ligand>
        <name>Zn(2+)</name>
        <dbReference type="ChEBI" id="CHEBI:29105"/>
        <label>2</label>
    </ligand>
</feature>
<feature type="binding site" evidence="1">
    <location>
        <position position="153"/>
    </location>
    <ligand>
        <name>Zn(2+)</name>
        <dbReference type="ChEBI" id="CHEBI:29105"/>
        <label>2</label>
    </ligand>
</feature>
<feature type="binding site" evidence="1">
    <location>
        <position position="493"/>
    </location>
    <ligand>
        <name>Mg(2+)</name>
        <dbReference type="ChEBI" id="CHEBI:18420"/>
        <note>catalytic</note>
    </ligand>
</feature>
<feature type="binding site" evidence="1">
    <location>
        <position position="495"/>
    </location>
    <ligand>
        <name>Mg(2+)</name>
        <dbReference type="ChEBI" id="CHEBI:18420"/>
        <note>catalytic</note>
    </ligand>
</feature>
<feature type="binding site" evidence="1">
    <location>
        <position position="497"/>
    </location>
    <ligand>
        <name>Mg(2+)</name>
        <dbReference type="ChEBI" id="CHEBI:18420"/>
        <note>catalytic</note>
    </ligand>
</feature>
<sequence>MKDPIDDQIPKRIKHLQFGINGPEEFVKDGTVEVSRRDLYTMTDRSPAEHGALDLHMGTSNKQINCATCGESMADCMGHFGYVKLALPVFHIGYFKATLTILQNICKDCSSVLLSDQEKRQFLKDLRRPGIDNLRRSQICKRINDHCKKMRRCSKCDAMQGVVKKAGPLKIIHERFRYVRKSQDDEENFRHSFDEALKTIPELKMHLSKAHDDLNPLKVLNLFKQITPVDCELLGMDPEHGRPENLLWRYVPAPPVCIRPSVAQEGATTEDDLTVKITEIIWTSSLIRAALSKGTPISNLMEQWEFMQLSIAMYINSEMPGLRPSDMPSKPIRGFCQRLKGKQGRFRGNLSGKRVDFSGRTVISPDPNLRIDQVAVPYRIAKILTFPERVTTQNKKHLQDCIRNGPDVHPGANYVIDRESGFKRFLRFGNRNRIADDLKIGDIVERHLHDNDVVLFNRQPSLHKLSIMAHLVKVRPWRTLRFNECVCGPYNADFDGDEMNLHVPQTEEAKTEALELMGIKNNLVSPRNGEPIIAATQDFITAAYLLSLKDTFLDRKSISNICCYMMDASTHIDLPPPAIIKPRCLWTGKQVFTVLMKPNRFSKVLVNLDAKTRSFSRIKSKTPEMCPKDGYLMIRNSEIIAGVVDKSVVGDGKKDSLFYVILRDYGALEAAEAITRLSKMCARFLGNRGFSIGIEDVQPGKSLSSQKEILVNKAYATSDDFIMQYAKGILECQPGMDQEATLEAKISSTLSKVRDDVGEICMDELGPANSPLIMATCGSKGSKINVSQMVACVGQQIISGKRVPDGFQDRSLPHFHKNSKHPLAKGFVSNSFYSGLTPTEFLFHAISGREGLVDTAVKTAETGYMSRRLMKSLEDLSSAYDGTVRSSNSDVVQFVYGDDGLDPTYMEGDGQAVEFKRTWIHSVNLNYDRHDSAMLPYEIIDYVNRALDDPKFLTNCNRDFIETIRTFVIENIAKYLASVRERRDLAPMLEEPDMDDLDDMEGDEFAPVAKRKSVENIIRVTEKQLRSFVDRCWEKYMRAKVEPGTAVGAIGAQSIGEPGTQMTLKTFHFAGVAAQTTLGVPRIKEIINAAKTISTPIITGQLINDRDERSARVVKGRIEKTYLKDVTSYIEEVYGPVTTYLSIQVNFDTISKLQLDITLADIAAAIWNTPKLKIPSQQVTVNNTLQQIHVHTSSDGKSSETEVYYRLQTYKRVLPDVVVAGIPTINRSVINQESGKIELFMEGTGLQAVMNTEGIVGTKTSTNHVMEMKDVLGIEAARYSIISEIGYTMAKHGLTVDPRHIMLLGDVMTCKGEVLGITRFGVAKMKDSVLALASFEKTTDHLFNAAARFAKDSIEGISECIVLGKLAPIGTNVFQLIRRTEEEEEQKPKELLFDTPSLHQLEITA</sequence>
<dbReference type="EC" id="2.7.7.6"/>
<dbReference type="EMBL" id="DQ156227">
    <property type="protein sequence ID" value="ABA54855.1"/>
    <property type="molecule type" value="mRNA"/>
</dbReference>
<dbReference type="EMBL" id="CU329671">
    <property type="protein sequence ID" value="CAB37604.1"/>
    <property type="molecule type" value="Genomic_DNA"/>
</dbReference>
<dbReference type="PIR" id="T40607">
    <property type="entry name" value="T40607"/>
</dbReference>
<dbReference type="RefSeq" id="NP_595506.1">
    <property type="nucleotide sequence ID" value="NM_001021416.2"/>
</dbReference>
<dbReference type="SMR" id="O94666"/>
<dbReference type="BioGRID" id="277609">
    <property type="interactions" value="5"/>
</dbReference>
<dbReference type="ComplexPortal" id="CPX-8905">
    <property type="entry name" value="DNA-directed RNA polymerase III complex"/>
</dbReference>
<dbReference type="FunCoup" id="O94666">
    <property type="interactions" value="721"/>
</dbReference>
<dbReference type="STRING" id="284812.O94666"/>
<dbReference type="iPTMnet" id="O94666"/>
<dbReference type="PaxDb" id="4896-SPBC651.08c.1"/>
<dbReference type="EnsemblFungi" id="SPBC651.08c.1">
    <property type="protein sequence ID" value="SPBC651.08c.1:pep"/>
    <property type="gene ID" value="SPBC651.08c"/>
</dbReference>
<dbReference type="GeneID" id="2541094"/>
<dbReference type="KEGG" id="spo:2541094"/>
<dbReference type="PomBase" id="SPBC651.08c">
    <property type="gene designation" value="rpc1"/>
</dbReference>
<dbReference type="VEuPathDB" id="FungiDB:SPBC651.08c"/>
<dbReference type="eggNOG" id="KOG0261">
    <property type="taxonomic scope" value="Eukaryota"/>
</dbReference>
<dbReference type="HOGENOM" id="CLU_000487_3_0_1"/>
<dbReference type="InParanoid" id="O94666"/>
<dbReference type="OMA" id="AVCPPYN"/>
<dbReference type="PhylomeDB" id="O94666"/>
<dbReference type="Reactome" id="R-SPO-76061">
    <property type="pathway name" value="RNA Polymerase III Transcription Initiation From Type 1 Promoter"/>
</dbReference>
<dbReference type="Reactome" id="R-SPO-76066">
    <property type="pathway name" value="RNA Polymerase III Transcription Initiation From Type 2 Promoter"/>
</dbReference>
<dbReference type="PRO" id="PR:O94666"/>
<dbReference type="Proteomes" id="UP000002485">
    <property type="component" value="Chromosome II"/>
</dbReference>
<dbReference type="GO" id="GO:0000785">
    <property type="term" value="C:chromatin"/>
    <property type="evidence" value="ECO:0000314"/>
    <property type="project" value="PomBase"/>
</dbReference>
<dbReference type="GO" id="GO:0005739">
    <property type="term" value="C:mitochondrion"/>
    <property type="evidence" value="ECO:0007669"/>
    <property type="project" value="GOC"/>
</dbReference>
<dbReference type="GO" id="GO:0005666">
    <property type="term" value="C:RNA polymerase III complex"/>
    <property type="evidence" value="ECO:0000318"/>
    <property type="project" value="GO_Central"/>
</dbReference>
<dbReference type="GO" id="GO:0003677">
    <property type="term" value="F:DNA binding"/>
    <property type="evidence" value="ECO:0007669"/>
    <property type="project" value="InterPro"/>
</dbReference>
<dbReference type="GO" id="GO:0003899">
    <property type="term" value="F:DNA-directed RNA polymerase activity"/>
    <property type="evidence" value="ECO:0007669"/>
    <property type="project" value="UniProtKB-EC"/>
</dbReference>
<dbReference type="GO" id="GO:0046872">
    <property type="term" value="F:metal ion binding"/>
    <property type="evidence" value="ECO:0007669"/>
    <property type="project" value="UniProtKB-KW"/>
</dbReference>
<dbReference type="GO" id="GO:0006383">
    <property type="term" value="P:transcription by RNA polymerase III"/>
    <property type="evidence" value="ECO:0000266"/>
    <property type="project" value="PomBase"/>
</dbReference>
<dbReference type="CDD" id="cd02736">
    <property type="entry name" value="RNAP_III_Rpc1_C"/>
    <property type="match status" value="1"/>
</dbReference>
<dbReference type="CDD" id="cd02583">
    <property type="entry name" value="RNAP_III_RPC1_N"/>
    <property type="match status" value="1"/>
</dbReference>
<dbReference type="FunFam" id="2.40.40.20:FF:000019">
    <property type="entry name" value="DNA-directed RNA polymerase II subunit RPB1"/>
    <property type="match status" value="1"/>
</dbReference>
<dbReference type="FunFam" id="1.10.132.30:FF:000001">
    <property type="entry name" value="DNA-directed RNA polymerase subunit"/>
    <property type="match status" value="1"/>
</dbReference>
<dbReference type="FunFam" id="1.10.150.390:FF:000004">
    <property type="entry name" value="DNA-directed RNA polymerase subunit"/>
    <property type="match status" value="1"/>
</dbReference>
<dbReference type="FunFam" id="1.10.274.100:FF:000008">
    <property type="entry name" value="DNA-directed RNA polymerase subunit"/>
    <property type="match status" value="1"/>
</dbReference>
<dbReference type="FunFam" id="3.30.1490.180:FF:000002">
    <property type="entry name" value="DNA-directed RNA polymerase subunit"/>
    <property type="match status" value="1"/>
</dbReference>
<dbReference type="FunFam" id="4.10.860.120:FF:000004">
    <property type="entry name" value="DNA-directed RNA polymerase subunit"/>
    <property type="match status" value="1"/>
</dbReference>
<dbReference type="Gene3D" id="1.10.132.30">
    <property type="match status" value="1"/>
</dbReference>
<dbReference type="Gene3D" id="1.10.150.390">
    <property type="match status" value="1"/>
</dbReference>
<dbReference type="Gene3D" id="2.40.40.20">
    <property type="match status" value="1"/>
</dbReference>
<dbReference type="Gene3D" id="6.10.250.2940">
    <property type="match status" value="1"/>
</dbReference>
<dbReference type="Gene3D" id="6.20.50.80">
    <property type="match status" value="1"/>
</dbReference>
<dbReference type="Gene3D" id="3.30.1490.180">
    <property type="entry name" value="RNA polymerase ii"/>
    <property type="match status" value="1"/>
</dbReference>
<dbReference type="Gene3D" id="4.10.860.120">
    <property type="entry name" value="RNA polymerase II, clamp domain"/>
    <property type="match status" value="1"/>
</dbReference>
<dbReference type="Gene3D" id="1.10.274.100">
    <property type="entry name" value="RNA polymerase Rpb1, domain 3"/>
    <property type="match status" value="1"/>
</dbReference>
<dbReference type="InterPro" id="IPR000722">
    <property type="entry name" value="RNA_pol_asu"/>
</dbReference>
<dbReference type="InterPro" id="IPR006592">
    <property type="entry name" value="RNA_pol_N"/>
</dbReference>
<dbReference type="InterPro" id="IPR007080">
    <property type="entry name" value="RNA_pol_Rpb1_1"/>
</dbReference>
<dbReference type="InterPro" id="IPR007066">
    <property type="entry name" value="RNA_pol_Rpb1_3"/>
</dbReference>
<dbReference type="InterPro" id="IPR042102">
    <property type="entry name" value="RNA_pol_Rpb1_3_sf"/>
</dbReference>
<dbReference type="InterPro" id="IPR007083">
    <property type="entry name" value="RNA_pol_Rpb1_4"/>
</dbReference>
<dbReference type="InterPro" id="IPR007081">
    <property type="entry name" value="RNA_pol_Rpb1_5"/>
</dbReference>
<dbReference type="InterPro" id="IPR044893">
    <property type="entry name" value="RNA_pol_Rpb1_clamp_domain"/>
</dbReference>
<dbReference type="InterPro" id="IPR035698">
    <property type="entry name" value="RNAP_III_Rpc1_C"/>
</dbReference>
<dbReference type="InterPro" id="IPR035697">
    <property type="entry name" value="RNAP_III_RPC1_N"/>
</dbReference>
<dbReference type="InterPro" id="IPR038120">
    <property type="entry name" value="Rpb1_funnel_sf"/>
</dbReference>
<dbReference type="InterPro" id="IPR015700">
    <property type="entry name" value="RPC1"/>
</dbReference>
<dbReference type="NCBIfam" id="NF006336">
    <property type="entry name" value="PRK08566.1"/>
    <property type="match status" value="1"/>
</dbReference>
<dbReference type="PANTHER" id="PTHR48446">
    <property type="entry name" value="DNA-DIRECTED RNA POLYMERASE SUBUNIT BETA' N-TERMINAL SECTION"/>
    <property type="match status" value="1"/>
</dbReference>
<dbReference type="PANTHER" id="PTHR48446:SF1">
    <property type="entry name" value="DNA-DIRECTED RNA POLYMERASE SUBUNIT BETA' N-TERMINAL SECTION"/>
    <property type="match status" value="1"/>
</dbReference>
<dbReference type="Pfam" id="PF04997">
    <property type="entry name" value="RNA_pol_Rpb1_1"/>
    <property type="match status" value="1"/>
</dbReference>
<dbReference type="Pfam" id="PF00623">
    <property type="entry name" value="RNA_pol_Rpb1_2"/>
    <property type="match status" value="1"/>
</dbReference>
<dbReference type="Pfam" id="PF04983">
    <property type="entry name" value="RNA_pol_Rpb1_3"/>
    <property type="match status" value="1"/>
</dbReference>
<dbReference type="Pfam" id="PF05000">
    <property type="entry name" value="RNA_pol_Rpb1_4"/>
    <property type="match status" value="1"/>
</dbReference>
<dbReference type="Pfam" id="PF04998">
    <property type="entry name" value="RNA_pol_Rpb1_5"/>
    <property type="match status" value="1"/>
</dbReference>
<dbReference type="SMART" id="SM00663">
    <property type="entry name" value="RPOLA_N"/>
    <property type="match status" value="1"/>
</dbReference>
<dbReference type="SUPFAM" id="SSF64484">
    <property type="entry name" value="beta and beta-prime subunits of DNA dependent RNA-polymerase"/>
    <property type="match status" value="1"/>
</dbReference>
<proteinExistence type="evidence at transcript level"/>
<name>RPC1_SCHPO</name>
<gene>
    <name type="primary">rpc1</name>
    <name type="ORF">SPBC651.08c</name>
</gene>
<evidence type="ECO:0000250" key="1"/>
<evidence type="ECO:0000305" key="2"/>
<accession>O94666</accession>
<accession>Q0QYE3</accession>
<keyword id="KW-0240">DNA-directed RNA polymerase</keyword>
<keyword id="KW-0460">Magnesium</keyword>
<keyword id="KW-0479">Metal-binding</keyword>
<keyword id="KW-0548">Nucleotidyltransferase</keyword>
<keyword id="KW-0539">Nucleus</keyword>
<keyword id="KW-1185">Reference proteome</keyword>
<keyword id="KW-0804">Transcription</keyword>
<keyword id="KW-0808">Transferase</keyword>
<keyword id="KW-0862">Zinc</keyword>